<organism>
    <name type="scientific">Emericella nidulans (strain FGSC A4 / ATCC 38163 / CBS 112.46 / NRRL 194 / M139)</name>
    <name type="common">Aspergillus nidulans</name>
    <dbReference type="NCBI Taxonomy" id="227321"/>
    <lineage>
        <taxon>Eukaryota</taxon>
        <taxon>Fungi</taxon>
        <taxon>Dikarya</taxon>
        <taxon>Ascomycota</taxon>
        <taxon>Pezizomycotina</taxon>
        <taxon>Eurotiomycetes</taxon>
        <taxon>Eurotiomycetidae</taxon>
        <taxon>Eurotiales</taxon>
        <taxon>Aspergillaceae</taxon>
        <taxon>Aspergillus</taxon>
        <taxon>Aspergillus subgen. Nidulantes</taxon>
    </lineage>
</organism>
<protein>
    <recommendedName>
        <fullName>Endo-beta-1,4-glucanase B</fullName>
        <shortName>Endoglucanase B</shortName>
        <ecNumber>3.2.1.4</ecNumber>
    </recommendedName>
    <alternativeName>
        <fullName>Carboxymethylcellulase B</fullName>
    </alternativeName>
    <alternativeName>
        <fullName>Cellulase B</fullName>
    </alternativeName>
</protein>
<feature type="signal peptide" evidence="2">
    <location>
        <begin position="1"/>
        <end position="17"/>
    </location>
</feature>
<feature type="chain" id="PRO_0000394058" description="Endo-beta-1,4-glucanase B">
    <location>
        <begin position="18"/>
        <end position="328"/>
    </location>
</feature>
<feature type="active site" description="Proton donor" evidence="1">
    <location>
        <position position="155"/>
    </location>
</feature>
<feature type="active site" description="Nucleophile" evidence="1">
    <location>
        <position position="262"/>
    </location>
</feature>
<feature type="glycosylation site" description="N-linked (GlcNAc...) asparagine" evidence="2">
    <location>
        <position position="95"/>
    </location>
</feature>
<name>EGLB_EMENI</name>
<accession>Q1HFS8</accession>
<accession>C8VF90</accession>
<accession>Q5B2L6</accession>
<reference key="1">
    <citation type="journal article" date="2006" name="Proc. Natl. Acad. Sci. U.S.A.">
        <title>Development and application of a suite of polysaccharide-degrading enzymes for analyzing plant cell walls.</title>
        <authorList>
            <person name="Bauer S."/>
            <person name="Vasu P."/>
            <person name="Persson S."/>
            <person name="Mort A.J."/>
            <person name="Somerville C.R."/>
        </authorList>
    </citation>
    <scope>NUCLEOTIDE SEQUENCE [MRNA]</scope>
    <scope>FUNCTION</scope>
    <scope>BIOPHYSICOCHEMICAL PROPERTIES</scope>
    <source>
        <strain>FGSC A4 / ATCC 38163 / CBS 112.46 / NRRL 194 / M139</strain>
    </source>
</reference>
<reference key="2">
    <citation type="journal article" date="2005" name="Nature">
        <title>Sequencing of Aspergillus nidulans and comparative analysis with A. fumigatus and A. oryzae.</title>
        <authorList>
            <person name="Galagan J.E."/>
            <person name="Calvo S.E."/>
            <person name="Cuomo C."/>
            <person name="Ma L.-J."/>
            <person name="Wortman J.R."/>
            <person name="Batzoglou S."/>
            <person name="Lee S.-I."/>
            <person name="Bastuerkmen M."/>
            <person name="Spevak C.C."/>
            <person name="Clutterbuck J."/>
            <person name="Kapitonov V."/>
            <person name="Jurka J."/>
            <person name="Scazzocchio C."/>
            <person name="Farman M.L."/>
            <person name="Butler J."/>
            <person name="Purcell S."/>
            <person name="Harris S."/>
            <person name="Braus G.H."/>
            <person name="Draht O."/>
            <person name="Busch S."/>
            <person name="D'Enfert C."/>
            <person name="Bouchier C."/>
            <person name="Goldman G.H."/>
            <person name="Bell-Pedersen D."/>
            <person name="Griffiths-Jones S."/>
            <person name="Doonan J.H."/>
            <person name="Yu J."/>
            <person name="Vienken K."/>
            <person name="Pain A."/>
            <person name="Freitag M."/>
            <person name="Selker E.U."/>
            <person name="Archer D.B."/>
            <person name="Penalva M.A."/>
            <person name="Oakley B.R."/>
            <person name="Momany M."/>
            <person name="Tanaka T."/>
            <person name="Kumagai T."/>
            <person name="Asai K."/>
            <person name="Machida M."/>
            <person name="Nierman W.C."/>
            <person name="Denning D.W."/>
            <person name="Caddick M.X."/>
            <person name="Hynes M."/>
            <person name="Paoletti M."/>
            <person name="Fischer R."/>
            <person name="Miller B.L."/>
            <person name="Dyer P.S."/>
            <person name="Sachs M.S."/>
            <person name="Osmani S.A."/>
            <person name="Birren B.W."/>
        </authorList>
    </citation>
    <scope>NUCLEOTIDE SEQUENCE [LARGE SCALE GENOMIC DNA]</scope>
    <source>
        <strain>FGSC A4 / ATCC 38163 / CBS 112.46 / NRRL 194 / M139</strain>
    </source>
</reference>
<reference key="3">
    <citation type="journal article" date="2009" name="Fungal Genet. Biol.">
        <title>The 2008 update of the Aspergillus nidulans genome annotation: a community effort.</title>
        <authorList>
            <person name="Wortman J.R."/>
            <person name="Gilsenan J.M."/>
            <person name="Joardar V."/>
            <person name="Deegan J."/>
            <person name="Clutterbuck J."/>
            <person name="Andersen M.R."/>
            <person name="Archer D."/>
            <person name="Bencina M."/>
            <person name="Braus G."/>
            <person name="Coutinho P."/>
            <person name="von Dohren H."/>
            <person name="Doonan J."/>
            <person name="Driessen A.J."/>
            <person name="Durek P."/>
            <person name="Espeso E."/>
            <person name="Fekete E."/>
            <person name="Flipphi M."/>
            <person name="Estrada C.G."/>
            <person name="Geysens S."/>
            <person name="Goldman G."/>
            <person name="de Groot P.W."/>
            <person name="Hansen K."/>
            <person name="Harris S.D."/>
            <person name="Heinekamp T."/>
            <person name="Helmstaedt K."/>
            <person name="Henrissat B."/>
            <person name="Hofmann G."/>
            <person name="Homan T."/>
            <person name="Horio T."/>
            <person name="Horiuchi H."/>
            <person name="James S."/>
            <person name="Jones M."/>
            <person name="Karaffa L."/>
            <person name="Karanyi Z."/>
            <person name="Kato M."/>
            <person name="Keller N."/>
            <person name="Kelly D.E."/>
            <person name="Kiel J.A."/>
            <person name="Kim J.M."/>
            <person name="van der Klei I.J."/>
            <person name="Klis F.M."/>
            <person name="Kovalchuk A."/>
            <person name="Krasevec N."/>
            <person name="Kubicek C.P."/>
            <person name="Liu B."/>
            <person name="Maccabe A."/>
            <person name="Meyer V."/>
            <person name="Mirabito P."/>
            <person name="Miskei M."/>
            <person name="Mos M."/>
            <person name="Mullins J."/>
            <person name="Nelson D.R."/>
            <person name="Nielsen J."/>
            <person name="Oakley B.R."/>
            <person name="Osmani S.A."/>
            <person name="Pakula T."/>
            <person name="Paszewski A."/>
            <person name="Paulsen I."/>
            <person name="Pilsyk S."/>
            <person name="Pocsi I."/>
            <person name="Punt P.J."/>
            <person name="Ram A.F."/>
            <person name="Ren Q."/>
            <person name="Robellet X."/>
            <person name="Robson G."/>
            <person name="Seiboth B."/>
            <person name="van Solingen P."/>
            <person name="Specht T."/>
            <person name="Sun J."/>
            <person name="Taheri-Talesh N."/>
            <person name="Takeshita N."/>
            <person name="Ussery D."/>
            <person name="vanKuyk P.A."/>
            <person name="Visser H."/>
            <person name="van de Vondervoort P.J."/>
            <person name="de Vries R.P."/>
            <person name="Walton J."/>
            <person name="Xiang X."/>
            <person name="Xiong Y."/>
            <person name="Zeng A.P."/>
            <person name="Brandt B.W."/>
            <person name="Cornell M.J."/>
            <person name="van den Hondel C.A."/>
            <person name="Visser J."/>
            <person name="Oliver S.G."/>
            <person name="Turner G."/>
        </authorList>
    </citation>
    <scope>GENOME REANNOTATION</scope>
    <source>
        <strain>FGSC A4 / ATCC 38163 / CBS 112.46 / NRRL 194 / M139</strain>
    </source>
</reference>
<gene>
    <name type="primary">eglB</name>
    <name type="ORF">AN5214</name>
</gene>
<sequence length="328" mass="36080">MKVNTLLVAVAAGTAMAAPQLKKRAGFTFFGVTEAGAEFGEKSIPGVWGTDYTFPDTESILTLISKGFNTFRIPFLMERLTPEMTGSFDEGYLKNLTSVVNAVTDAGAWAIVDAQNFGRFNGEIISSASDFQTWWKNVAAEFADNKNVIFDTNNEFHDMDQTLVLDLNQAAINGIRAAGATSQYIFVEGNSYTGAWTWTDNNDNLKSLTDPQDKIVYEMHQYLDTDGSGTHETCVSETIGAERVESATQWLKDNGKLGVIGEFAGGNNEICRAAVKSLLDALKENDDVWLGALWWAAGPWWEDYMFSMEPTDGIAYTGMLSTLEAYMN</sequence>
<proteinExistence type="evidence at protein level"/>
<evidence type="ECO:0000250" key="1"/>
<evidence type="ECO:0000255" key="2"/>
<evidence type="ECO:0000269" key="3">
    <source>
    </source>
</evidence>
<evidence type="ECO:0000305" key="4"/>
<dbReference type="EC" id="3.2.1.4"/>
<dbReference type="EMBL" id="DQ490496">
    <property type="protein sequence ID" value="ABF50872.1"/>
    <property type="molecule type" value="mRNA"/>
</dbReference>
<dbReference type="EMBL" id="AACD01000089">
    <property type="protein sequence ID" value="EAA62395.1"/>
    <property type="status" value="ALT_SEQ"/>
    <property type="molecule type" value="Genomic_DNA"/>
</dbReference>
<dbReference type="EMBL" id="BN001305">
    <property type="protein sequence ID" value="CBF81096.1"/>
    <property type="status" value="ALT_SEQ"/>
    <property type="molecule type" value="Genomic_DNA"/>
</dbReference>
<dbReference type="RefSeq" id="XP_662818.1">
    <property type="nucleotide sequence ID" value="XM_657726.1"/>
</dbReference>
<dbReference type="SMR" id="Q1HFS8"/>
<dbReference type="STRING" id="227321.Q1HFS8"/>
<dbReference type="CAZy" id="GH5">
    <property type="family name" value="Glycoside Hydrolase Family 5"/>
</dbReference>
<dbReference type="GlyCosmos" id="Q1HFS8">
    <property type="glycosylation" value="1 site, No reported glycans"/>
</dbReference>
<dbReference type="KEGG" id="ani:ANIA_05214"/>
<dbReference type="VEuPathDB" id="FungiDB:AN5214"/>
<dbReference type="eggNOG" id="ENOG502QXN4">
    <property type="taxonomic scope" value="Eukaryota"/>
</dbReference>
<dbReference type="HOGENOM" id="CLU_029718_0_2_1"/>
<dbReference type="InParanoid" id="Q1HFS8"/>
<dbReference type="OrthoDB" id="5823761at2759"/>
<dbReference type="Proteomes" id="UP000000560">
    <property type="component" value="Chromosome V"/>
</dbReference>
<dbReference type="GO" id="GO:0005576">
    <property type="term" value="C:extracellular region"/>
    <property type="evidence" value="ECO:0007669"/>
    <property type="project" value="UniProtKB-SubCell"/>
</dbReference>
<dbReference type="GO" id="GO:0008810">
    <property type="term" value="F:cellulase activity"/>
    <property type="evidence" value="ECO:0000314"/>
    <property type="project" value="UniProtKB"/>
</dbReference>
<dbReference type="GO" id="GO:0030245">
    <property type="term" value="P:cellulose catabolic process"/>
    <property type="evidence" value="ECO:0007669"/>
    <property type="project" value="UniProtKB-KW"/>
</dbReference>
<dbReference type="GO" id="GO:0009251">
    <property type="term" value="P:glucan catabolic process"/>
    <property type="evidence" value="ECO:0000314"/>
    <property type="project" value="UniProtKB"/>
</dbReference>
<dbReference type="FunFam" id="3.20.20.80:FF:000078">
    <property type="entry name" value="Endo-beta-1,4-glucanase B"/>
    <property type="match status" value="1"/>
</dbReference>
<dbReference type="Gene3D" id="3.20.20.80">
    <property type="entry name" value="Glycosidases"/>
    <property type="match status" value="1"/>
</dbReference>
<dbReference type="InterPro" id="IPR001547">
    <property type="entry name" value="Glyco_hydro_5"/>
</dbReference>
<dbReference type="InterPro" id="IPR017853">
    <property type="entry name" value="Glycoside_hydrolase_SF"/>
</dbReference>
<dbReference type="PANTHER" id="PTHR34142">
    <property type="entry name" value="ENDO-BETA-1,4-GLUCANASE A"/>
    <property type="match status" value="1"/>
</dbReference>
<dbReference type="PANTHER" id="PTHR34142:SF6">
    <property type="entry name" value="ENDO-BETA-1,4-GLUCANASE B"/>
    <property type="match status" value="1"/>
</dbReference>
<dbReference type="Pfam" id="PF00150">
    <property type="entry name" value="Cellulase"/>
    <property type="match status" value="1"/>
</dbReference>
<dbReference type="SUPFAM" id="SSF51445">
    <property type="entry name" value="(Trans)glycosidases"/>
    <property type="match status" value="1"/>
</dbReference>
<comment type="function">
    <text evidence="3">Has endoglucanase activity on substrates containing beta-1,4 glycosidic bonds, like in carboxymethylcellulose (CMC), hydroxyethylcellulose (HEC) and beta-glucan. Involved in the degradation of complex natural cellulosic substrates.</text>
</comment>
<comment type="catalytic activity">
    <reaction>
        <text>Endohydrolysis of (1-&gt;4)-beta-D-glucosidic linkages in cellulose, lichenin and cereal beta-D-glucans.</text>
        <dbReference type="EC" id="3.2.1.4"/>
    </reaction>
</comment>
<comment type="biophysicochemical properties">
    <phDependence>
        <text evidence="3">Optimum pH is 4.0.</text>
    </phDependence>
    <temperatureDependence>
        <text evidence="3">Optimum temperature is 52 degrees Celsius.</text>
    </temperatureDependence>
</comment>
<comment type="subcellular location">
    <subcellularLocation>
        <location evidence="1">Secreted</location>
    </subcellularLocation>
</comment>
<comment type="similarity">
    <text evidence="4">Belongs to the glycosyl hydrolase 5 (cellulase A) family.</text>
</comment>
<comment type="sequence caution" evidence="4">
    <conflict type="erroneous gene model prediction">
        <sequence resource="EMBL-CDS" id="CBF81096"/>
    </conflict>
</comment>
<comment type="sequence caution" evidence="4">
    <conflict type="erroneous gene model prediction">
        <sequence resource="EMBL-CDS" id="EAA62395"/>
    </conflict>
</comment>
<keyword id="KW-0119">Carbohydrate metabolism</keyword>
<keyword id="KW-0136">Cellulose degradation</keyword>
<keyword id="KW-0325">Glycoprotein</keyword>
<keyword id="KW-0326">Glycosidase</keyword>
<keyword id="KW-0378">Hydrolase</keyword>
<keyword id="KW-0624">Polysaccharide degradation</keyword>
<keyword id="KW-1185">Reference proteome</keyword>
<keyword id="KW-0964">Secreted</keyword>
<keyword id="KW-0732">Signal</keyword>